<dbReference type="EMBL" id="AY509253">
    <property type="protein sequence ID" value="AAS00922.1"/>
    <property type="molecule type" value="Genomic_DNA"/>
</dbReference>
<dbReference type="RefSeq" id="YP_024575.1">
    <property type="nucleotide sequence ID" value="NC_005881.2"/>
</dbReference>
<dbReference type="SMR" id="Q6R7J3"/>
<dbReference type="KEGG" id="vg:2948168"/>
<dbReference type="Proteomes" id="UP000007021">
    <property type="component" value="Segment"/>
</dbReference>
<dbReference type="InterPro" id="IPR004289">
    <property type="entry name" value="Herpes_UL92"/>
</dbReference>
<dbReference type="Pfam" id="PF03048">
    <property type="entry name" value="Herpes_UL92"/>
    <property type="match status" value="1"/>
</dbReference>
<organism>
    <name type="scientific">Ostreid herpesvirus 1 (isolate France)</name>
    <name type="common">OsHV-1</name>
    <name type="synonym">Pacific oyster herpesvirus</name>
    <dbReference type="NCBI Taxonomy" id="654903"/>
    <lineage>
        <taxon>Viruses</taxon>
        <taxon>Duplodnaviria</taxon>
        <taxon>Heunggongvirae</taxon>
        <taxon>Peploviricota</taxon>
        <taxon>Herviviricetes</taxon>
        <taxon>Herpesvirales</taxon>
        <taxon>Malacoherpesviridae</taxon>
        <taxon>Ostreavirus</taxon>
        <taxon>Ostreavirus ostreidmalaco1</taxon>
        <taxon>Ostreid herpesvirus 1</taxon>
    </lineage>
</organism>
<organismHost>
    <name type="scientific">Magallana gigas</name>
    <name type="common">Pacific oyster</name>
    <name type="synonym">Crassostrea gigas</name>
    <dbReference type="NCBI Taxonomy" id="29159"/>
</organismHost>
<organismHost>
    <name type="scientific">Pecten maximus</name>
    <name type="common">King scallop</name>
    <name type="synonym">Pilgrim's clam</name>
    <dbReference type="NCBI Taxonomy" id="6579"/>
</organismHost>
<sequence>MKRSYDSINECGAYINNAADNICQCKMNRIDSAFGGWLTNLTEVYYCPTHNIYHHCDGDGTCIIVNSVCTRSGTCMGISTLVGVTHDLMDIDSLPAFDRFKLRMMNKGYFWISMQDRLKEELEEAKSGDEGMTMETHFRNKPDVESTLTRLYYYFKRELGMITRGTQESKLEKVYIMFEEMALRLLESRMTNHDKKQKLLAKVSKLISKQNTKSHFTTSVNKLITSDLTYPERIVKPLMDLKLSELYI</sequence>
<gene>
    <name type="ORF">ORF30</name>
</gene>
<proteinExistence type="predicted"/>
<accession>Q6R7J3</accession>
<reference key="1">
    <citation type="journal article" date="2005" name="J. Gen. Virol.">
        <title>A novel class of herpesvirus with bivalve hosts.</title>
        <authorList>
            <person name="Davison A.J."/>
            <person name="Trus B.L."/>
            <person name="Cheng N."/>
            <person name="Steven A.C."/>
            <person name="Watson M.S."/>
            <person name="Cunningham C."/>
            <person name="Le Deuff R.M."/>
            <person name="Renault T."/>
        </authorList>
    </citation>
    <scope>NUCLEOTIDE SEQUENCE [LARGE SCALE GENOMIC DNA]</scope>
</reference>
<protein>
    <recommendedName>
        <fullName>Uncharacterized protein ORF30</fullName>
    </recommendedName>
</protein>
<name>Y030_OSHVF</name>
<feature type="chain" id="PRO_0000385061" description="Uncharacterized protein ORF30">
    <location>
        <begin position="1"/>
        <end position="248"/>
    </location>
</feature>
<keyword id="KW-1185">Reference proteome</keyword>